<comment type="function">
    <text evidence="1">One of the primary rRNA binding proteins, this protein initially binds near the 5'-end of the 23S rRNA. It is important during the early stages of 50S assembly. It makes multiple contacts with different domains of the 23S rRNA in the assembled 50S subunit and ribosome.</text>
</comment>
<comment type="function">
    <text evidence="1">Forms part of the polypeptide exit tunnel.</text>
</comment>
<comment type="subunit">
    <text evidence="1">Part of the 50S ribosomal subunit.</text>
</comment>
<comment type="similarity">
    <text evidence="1">Belongs to the universal ribosomal protein uL4 family.</text>
</comment>
<reference key="1">
    <citation type="journal article" date="2006" name="Genome Biol.">
        <title>Genomic analysis reveals that Pseudomonas aeruginosa virulence is combinatorial.</title>
        <authorList>
            <person name="Lee D.G."/>
            <person name="Urbach J.M."/>
            <person name="Wu G."/>
            <person name="Liberati N.T."/>
            <person name="Feinbaum R.L."/>
            <person name="Miyata S."/>
            <person name="Diggins L.T."/>
            <person name="He J."/>
            <person name="Saucier M."/>
            <person name="Deziel E."/>
            <person name="Friedman L."/>
            <person name="Li L."/>
            <person name="Grills G."/>
            <person name="Montgomery K."/>
            <person name="Kucherlapati R."/>
            <person name="Rahme L.G."/>
            <person name="Ausubel F.M."/>
        </authorList>
    </citation>
    <scope>NUCLEOTIDE SEQUENCE [LARGE SCALE GENOMIC DNA]</scope>
    <source>
        <strain>UCBPP-PA14</strain>
    </source>
</reference>
<evidence type="ECO:0000255" key="1">
    <source>
        <dbReference type="HAMAP-Rule" id="MF_01328"/>
    </source>
</evidence>
<evidence type="ECO:0000256" key="2">
    <source>
        <dbReference type="SAM" id="MobiDB-lite"/>
    </source>
</evidence>
<evidence type="ECO:0000305" key="3"/>
<organism>
    <name type="scientific">Pseudomonas aeruginosa (strain UCBPP-PA14)</name>
    <dbReference type="NCBI Taxonomy" id="208963"/>
    <lineage>
        <taxon>Bacteria</taxon>
        <taxon>Pseudomonadati</taxon>
        <taxon>Pseudomonadota</taxon>
        <taxon>Gammaproteobacteria</taxon>
        <taxon>Pseudomonadales</taxon>
        <taxon>Pseudomonadaceae</taxon>
        <taxon>Pseudomonas</taxon>
    </lineage>
</organism>
<protein>
    <recommendedName>
        <fullName evidence="1">Large ribosomal subunit protein uL4</fullName>
    </recommendedName>
    <alternativeName>
        <fullName evidence="3">50S ribosomal protein L4</fullName>
    </alternativeName>
</protein>
<proteinExistence type="inferred from homology"/>
<feature type="chain" id="PRO_1000052470" description="Large ribosomal subunit protein uL4">
    <location>
        <begin position="1"/>
        <end position="200"/>
    </location>
</feature>
<feature type="region of interest" description="Disordered" evidence="2">
    <location>
        <begin position="38"/>
        <end position="67"/>
    </location>
</feature>
<sequence>MQLNVNGAQAIEVSERTFGGEFNETLVHQAVVAYMAGGRQGSKAQKTRSEVSGGGKKPWRQKGTGRARAGTIRSPIWRGGGTTFAAKPRSHEQKLNKKMYRAALRSILAELVRLDRLVVVADFAVDAPKTKGLVAKLDTLGLKDVLIVTDGVDENLYLAARNLAHVDVRDVQGSDPVSLIAYDKVLVTVSAVKKFEELLG</sequence>
<keyword id="KW-0687">Ribonucleoprotein</keyword>
<keyword id="KW-0689">Ribosomal protein</keyword>
<keyword id="KW-0694">RNA-binding</keyword>
<keyword id="KW-0699">rRNA-binding</keyword>
<name>RL4_PSEAB</name>
<gene>
    <name evidence="1" type="primary">rplD</name>
    <name type="ordered locus">PA14_08860</name>
</gene>
<accession>Q02T79</accession>
<dbReference type="EMBL" id="CP000438">
    <property type="protein sequence ID" value="ABJ13533.1"/>
    <property type="molecule type" value="Genomic_DNA"/>
</dbReference>
<dbReference type="RefSeq" id="WP_003093737.1">
    <property type="nucleotide sequence ID" value="NZ_CP034244.1"/>
</dbReference>
<dbReference type="SMR" id="Q02T79"/>
<dbReference type="GeneID" id="77219199"/>
<dbReference type="KEGG" id="pau:PA14_08860"/>
<dbReference type="PseudoCAP" id="PA14_08860"/>
<dbReference type="HOGENOM" id="CLU_041575_5_2_6"/>
<dbReference type="BioCyc" id="PAER208963:G1G74-737-MONOMER"/>
<dbReference type="Proteomes" id="UP000000653">
    <property type="component" value="Chromosome"/>
</dbReference>
<dbReference type="GO" id="GO:1990904">
    <property type="term" value="C:ribonucleoprotein complex"/>
    <property type="evidence" value="ECO:0007669"/>
    <property type="project" value="UniProtKB-KW"/>
</dbReference>
<dbReference type="GO" id="GO:0005840">
    <property type="term" value="C:ribosome"/>
    <property type="evidence" value="ECO:0007669"/>
    <property type="project" value="UniProtKB-KW"/>
</dbReference>
<dbReference type="GO" id="GO:0019843">
    <property type="term" value="F:rRNA binding"/>
    <property type="evidence" value="ECO:0007669"/>
    <property type="project" value="UniProtKB-UniRule"/>
</dbReference>
<dbReference type="GO" id="GO:0003735">
    <property type="term" value="F:structural constituent of ribosome"/>
    <property type="evidence" value="ECO:0007669"/>
    <property type="project" value="InterPro"/>
</dbReference>
<dbReference type="GO" id="GO:0006412">
    <property type="term" value="P:translation"/>
    <property type="evidence" value="ECO:0007669"/>
    <property type="project" value="UniProtKB-UniRule"/>
</dbReference>
<dbReference type="FunFam" id="3.40.1370.10:FF:000001">
    <property type="entry name" value="50S ribosomal protein L4"/>
    <property type="match status" value="1"/>
</dbReference>
<dbReference type="Gene3D" id="3.40.1370.10">
    <property type="match status" value="1"/>
</dbReference>
<dbReference type="HAMAP" id="MF_01328_B">
    <property type="entry name" value="Ribosomal_uL4_B"/>
    <property type="match status" value="1"/>
</dbReference>
<dbReference type="InterPro" id="IPR002136">
    <property type="entry name" value="Ribosomal_uL4"/>
</dbReference>
<dbReference type="InterPro" id="IPR013005">
    <property type="entry name" value="Ribosomal_uL4-like"/>
</dbReference>
<dbReference type="InterPro" id="IPR023574">
    <property type="entry name" value="Ribosomal_uL4_dom_sf"/>
</dbReference>
<dbReference type="NCBIfam" id="TIGR03953">
    <property type="entry name" value="rplD_bact"/>
    <property type="match status" value="1"/>
</dbReference>
<dbReference type="PANTHER" id="PTHR10746">
    <property type="entry name" value="50S RIBOSOMAL PROTEIN L4"/>
    <property type="match status" value="1"/>
</dbReference>
<dbReference type="PANTHER" id="PTHR10746:SF6">
    <property type="entry name" value="LARGE RIBOSOMAL SUBUNIT PROTEIN UL4M"/>
    <property type="match status" value="1"/>
</dbReference>
<dbReference type="Pfam" id="PF00573">
    <property type="entry name" value="Ribosomal_L4"/>
    <property type="match status" value="1"/>
</dbReference>
<dbReference type="SUPFAM" id="SSF52166">
    <property type="entry name" value="Ribosomal protein L4"/>
    <property type="match status" value="1"/>
</dbReference>